<comment type="function">
    <text evidence="1">As part of the DISP complex, may regulate the association of septins with actin and thereby regulate the actin cytoskeleton.</text>
</comment>
<comment type="subunit">
    <text evidence="1">Component of the DOCK7-induced septin displacement/DISP complex, at least composed of DOCK7, LRCH3 and MYO6.</text>
</comment>
<comment type="subcellular location">
    <subcellularLocation>
        <location evidence="1">Cytoplasm</location>
    </subcellularLocation>
</comment>
<comment type="caution">
    <text evidence="1">Predicted to contain a signal peptide and to be secreted. However, this is not consistent with an interaction with DOCK7 and MYO6 and the suggested function in cytoskeleton organization.</text>
</comment>
<comment type="sequence caution" evidence="5">
    <conflict type="erroneous initiation">
        <sequence resource="EMBL-CDS" id="BAE21984"/>
    </conflict>
    <text>Truncated N-terminus.</text>
</comment>
<comment type="sequence caution" evidence="5">
    <conflict type="frameshift">
        <sequence resource="EMBL-CDS" id="BAE33320"/>
    </conflict>
</comment>
<reference key="1">
    <citation type="journal article" date="2005" name="Science">
        <title>The transcriptional landscape of the mammalian genome.</title>
        <authorList>
            <person name="Carninci P."/>
            <person name="Kasukawa T."/>
            <person name="Katayama S."/>
            <person name="Gough J."/>
            <person name="Frith M.C."/>
            <person name="Maeda N."/>
            <person name="Oyama R."/>
            <person name="Ravasi T."/>
            <person name="Lenhard B."/>
            <person name="Wells C."/>
            <person name="Kodzius R."/>
            <person name="Shimokawa K."/>
            <person name="Bajic V.B."/>
            <person name="Brenner S.E."/>
            <person name="Batalov S."/>
            <person name="Forrest A.R."/>
            <person name="Zavolan M."/>
            <person name="Davis M.J."/>
            <person name="Wilming L.G."/>
            <person name="Aidinis V."/>
            <person name="Allen J.E."/>
            <person name="Ambesi-Impiombato A."/>
            <person name="Apweiler R."/>
            <person name="Aturaliya R.N."/>
            <person name="Bailey T.L."/>
            <person name="Bansal M."/>
            <person name="Baxter L."/>
            <person name="Beisel K.W."/>
            <person name="Bersano T."/>
            <person name="Bono H."/>
            <person name="Chalk A.M."/>
            <person name="Chiu K.P."/>
            <person name="Choudhary V."/>
            <person name="Christoffels A."/>
            <person name="Clutterbuck D.R."/>
            <person name="Crowe M.L."/>
            <person name="Dalla E."/>
            <person name="Dalrymple B.P."/>
            <person name="de Bono B."/>
            <person name="Della Gatta G."/>
            <person name="di Bernardo D."/>
            <person name="Down T."/>
            <person name="Engstrom P."/>
            <person name="Fagiolini M."/>
            <person name="Faulkner G."/>
            <person name="Fletcher C.F."/>
            <person name="Fukushima T."/>
            <person name="Furuno M."/>
            <person name="Futaki S."/>
            <person name="Gariboldi M."/>
            <person name="Georgii-Hemming P."/>
            <person name="Gingeras T.R."/>
            <person name="Gojobori T."/>
            <person name="Green R.E."/>
            <person name="Gustincich S."/>
            <person name="Harbers M."/>
            <person name="Hayashi Y."/>
            <person name="Hensch T.K."/>
            <person name="Hirokawa N."/>
            <person name="Hill D."/>
            <person name="Huminiecki L."/>
            <person name="Iacono M."/>
            <person name="Ikeo K."/>
            <person name="Iwama A."/>
            <person name="Ishikawa T."/>
            <person name="Jakt M."/>
            <person name="Kanapin A."/>
            <person name="Katoh M."/>
            <person name="Kawasawa Y."/>
            <person name="Kelso J."/>
            <person name="Kitamura H."/>
            <person name="Kitano H."/>
            <person name="Kollias G."/>
            <person name="Krishnan S.P."/>
            <person name="Kruger A."/>
            <person name="Kummerfeld S.K."/>
            <person name="Kurochkin I.V."/>
            <person name="Lareau L.F."/>
            <person name="Lazarevic D."/>
            <person name="Lipovich L."/>
            <person name="Liu J."/>
            <person name="Liuni S."/>
            <person name="McWilliam S."/>
            <person name="Madan Babu M."/>
            <person name="Madera M."/>
            <person name="Marchionni L."/>
            <person name="Matsuda H."/>
            <person name="Matsuzawa S."/>
            <person name="Miki H."/>
            <person name="Mignone F."/>
            <person name="Miyake S."/>
            <person name="Morris K."/>
            <person name="Mottagui-Tabar S."/>
            <person name="Mulder N."/>
            <person name="Nakano N."/>
            <person name="Nakauchi H."/>
            <person name="Ng P."/>
            <person name="Nilsson R."/>
            <person name="Nishiguchi S."/>
            <person name="Nishikawa S."/>
            <person name="Nori F."/>
            <person name="Ohara O."/>
            <person name="Okazaki Y."/>
            <person name="Orlando V."/>
            <person name="Pang K.C."/>
            <person name="Pavan W.J."/>
            <person name="Pavesi G."/>
            <person name="Pesole G."/>
            <person name="Petrovsky N."/>
            <person name="Piazza S."/>
            <person name="Reed J."/>
            <person name="Reid J.F."/>
            <person name="Ring B.Z."/>
            <person name="Ringwald M."/>
            <person name="Rost B."/>
            <person name="Ruan Y."/>
            <person name="Salzberg S.L."/>
            <person name="Sandelin A."/>
            <person name="Schneider C."/>
            <person name="Schoenbach C."/>
            <person name="Sekiguchi K."/>
            <person name="Semple C.A."/>
            <person name="Seno S."/>
            <person name="Sessa L."/>
            <person name="Sheng Y."/>
            <person name="Shibata Y."/>
            <person name="Shimada H."/>
            <person name="Shimada K."/>
            <person name="Silva D."/>
            <person name="Sinclair B."/>
            <person name="Sperling S."/>
            <person name="Stupka E."/>
            <person name="Sugiura K."/>
            <person name="Sultana R."/>
            <person name="Takenaka Y."/>
            <person name="Taki K."/>
            <person name="Tammoja K."/>
            <person name="Tan S.L."/>
            <person name="Tang S."/>
            <person name="Taylor M.S."/>
            <person name="Tegner J."/>
            <person name="Teichmann S.A."/>
            <person name="Ueda H.R."/>
            <person name="van Nimwegen E."/>
            <person name="Verardo R."/>
            <person name="Wei C.L."/>
            <person name="Yagi K."/>
            <person name="Yamanishi H."/>
            <person name="Zabarovsky E."/>
            <person name="Zhu S."/>
            <person name="Zimmer A."/>
            <person name="Hide W."/>
            <person name="Bult C."/>
            <person name="Grimmond S.M."/>
            <person name="Teasdale R.D."/>
            <person name="Liu E.T."/>
            <person name="Brusic V."/>
            <person name="Quackenbush J."/>
            <person name="Wahlestedt C."/>
            <person name="Mattick J.S."/>
            <person name="Hume D.A."/>
            <person name="Kai C."/>
            <person name="Sasaki D."/>
            <person name="Tomaru Y."/>
            <person name="Fukuda S."/>
            <person name="Kanamori-Katayama M."/>
            <person name="Suzuki M."/>
            <person name="Aoki J."/>
            <person name="Arakawa T."/>
            <person name="Iida J."/>
            <person name="Imamura K."/>
            <person name="Itoh M."/>
            <person name="Kato T."/>
            <person name="Kawaji H."/>
            <person name="Kawagashira N."/>
            <person name="Kawashima T."/>
            <person name="Kojima M."/>
            <person name="Kondo S."/>
            <person name="Konno H."/>
            <person name="Nakano K."/>
            <person name="Ninomiya N."/>
            <person name="Nishio T."/>
            <person name="Okada M."/>
            <person name="Plessy C."/>
            <person name="Shibata K."/>
            <person name="Shiraki T."/>
            <person name="Suzuki S."/>
            <person name="Tagami M."/>
            <person name="Waki K."/>
            <person name="Watahiki A."/>
            <person name="Okamura-Oho Y."/>
            <person name="Suzuki H."/>
            <person name="Kawai J."/>
            <person name="Hayashizaki Y."/>
        </authorList>
    </citation>
    <scope>NUCLEOTIDE SEQUENCE [LARGE SCALE MRNA]</scope>
    <source>
        <strain>C57BL/6J</strain>
        <strain>NOD</strain>
        <tissue>Head</tissue>
        <tissue>Thymus</tissue>
    </source>
</reference>
<reference key="2">
    <citation type="submission" date="2005-07" db="EMBL/GenBank/DDBJ databases">
        <authorList>
            <person name="Mural R.J."/>
            <person name="Adams M.D."/>
            <person name="Myers E.W."/>
            <person name="Smith H.O."/>
            <person name="Venter J.C."/>
        </authorList>
    </citation>
    <scope>NUCLEOTIDE SEQUENCE [LARGE SCALE GENOMIC DNA]</scope>
</reference>
<reference key="3">
    <citation type="journal article" date="2004" name="Genome Res.">
        <title>The status, quality, and expansion of the NIH full-length cDNA project: the Mammalian Gene Collection (MGC).</title>
        <authorList>
            <consortium name="The MGC Project Team"/>
        </authorList>
    </citation>
    <scope>NUCLEOTIDE SEQUENCE [LARGE SCALE MRNA]</scope>
    <source>
        <tissue>Brain</tissue>
    </source>
</reference>
<reference key="4">
    <citation type="journal article" date="2010" name="Cell">
        <title>A tissue-specific atlas of mouse protein phosphorylation and expression.</title>
        <authorList>
            <person name="Huttlin E.L."/>
            <person name="Jedrychowski M.P."/>
            <person name="Elias J.E."/>
            <person name="Goswami T."/>
            <person name="Rad R."/>
            <person name="Beausoleil S.A."/>
            <person name="Villen J."/>
            <person name="Haas W."/>
            <person name="Sowa M.E."/>
            <person name="Gygi S.P."/>
        </authorList>
    </citation>
    <scope>PHOSPHORYLATION [LARGE SCALE ANALYSIS] AT SER-324; SER-415 AND SER-625</scope>
    <scope>IDENTIFICATION BY MASS SPECTROMETRY [LARGE SCALE ANALYSIS]</scope>
    <source>
        <tissue>Brain</tissue>
        <tissue>Brown adipose tissue</tissue>
        <tissue>Heart</tissue>
        <tissue>Kidney</tissue>
        <tissue>Lung</tissue>
        <tissue>Spleen</tissue>
        <tissue>Testis</tissue>
    </source>
</reference>
<dbReference type="EMBL" id="AK134026">
    <property type="protein sequence ID" value="BAE21984.1"/>
    <property type="status" value="ALT_INIT"/>
    <property type="molecule type" value="mRNA"/>
</dbReference>
<dbReference type="EMBL" id="AK155550">
    <property type="protein sequence ID" value="BAE33320.1"/>
    <property type="status" value="ALT_FRAME"/>
    <property type="molecule type" value="mRNA"/>
</dbReference>
<dbReference type="EMBL" id="AK076529">
    <property type="protein sequence ID" value="BAC36380.1"/>
    <property type="molecule type" value="mRNA"/>
</dbReference>
<dbReference type="EMBL" id="CH466521">
    <property type="protein sequence ID" value="EDK97821.1"/>
    <property type="molecule type" value="Genomic_DNA"/>
</dbReference>
<dbReference type="EMBL" id="BC151058">
    <property type="protein sequence ID" value="AAI51059.1"/>
    <property type="molecule type" value="mRNA"/>
</dbReference>
<dbReference type="CCDS" id="CCDS37315.1"/>
<dbReference type="RefSeq" id="NP_001074724.1">
    <property type="nucleotide sequence ID" value="NM_001081255.1"/>
</dbReference>
<dbReference type="RefSeq" id="NP_001297603.1">
    <property type="nucleotide sequence ID" value="NM_001310674.1"/>
</dbReference>
<dbReference type="SMR" id="Q8BVU0"/>
<dbReference type="BioGRID" id="213886">
    <property type="interactions" value="4"/>
</dbReference>
<dbReference type="FunCoup" id="Q8BVU0">
    <property type="interactions" value="3111"/>
</dbReference>
<dbReference type="STRING" id="10090.ENSMUSP00000130708"/>
<dbReference type="GlyGen" id="Q8BVU0">
    <property type="glycosylation" value="2 sites, 1 O-linked glycan (2 sites)"/>
</dbReference>
<dbReference type="iPTMnet" id="Q8BVU0"/>
<dbReference type="PhosphoSitePlus" id="Q8BVU0"/>
<dbReference type="jPOST" id="Q8BVU0"/>
<dbReference type="PaxDb" id="10090-ENSMUSP00000023491"/>
<dbReference type="PeptideAtlas" id="Q8BVU0"/>
<dbReference type="ProteomicsDB" id="292031"/>
<dbReference type="Pumba" id="Q8BVU0"/>
<dbReference type="Antibodypedia" id="2704">
    <property type="antibodies" value="91 antibodies from 18 providers"/>
</dbReference>
<dbReference type="Ensembl" id="ENSMUST00000023491.13">
    <property type="protein sequence ID" value="ENSMUSP00000023491.7"/>
    <property type="gene ID" value="ENSMUSG00000022801.14"/>
</dbReference>
<dbReference type="GeneID" id="70144"/>
<dbReference type="KEGG" id="mmu:70144"/>
<dbReference type="UCSC" id="uc007yzr.1">
    <property type="organism name" value="mouse"/>
</dbReference>
<dbReference type="AGR" id="MGI:1917394"/>
<dbReference type="CTD" id="84859"/>
<dbReference type="MGI" id="MGI:1917394">
    <property type="gene designation" value="Lrch3"/>
</dbReference>
<dbReference type="VEuPathDB" id="HostDB:ENSMUSG00000022801"/>
<dbReference type="eggNOG" id="KOG0532">
    <property type="taxonomic scope" value="Eukaryota"/>
</dbReference>
<dbReference type="GeneTree" id="ENSGT00940000158330"/>
<dbReference type="InParanoid" id="Q8BVU0"/>
<dbReference type="OMA" id="CMLYSWI"/>
<dbReference type="OrthoDB" id="660555at2759"/>
<dbReference type="TreeFam" id="TF318428"/>
<dbReference type="BioGRID-ORCS" id="70144">
    <property type="hits" value="3 hits in 77 CRISPR screens"/>
</dbReference>
<dbReference type="ChiTaRS" id="Lrch3">
    <property type="organism name" value="mouse"/>
</dbReference>
<dbReference type="PRO" id="PR:Q8BVU0"/>
<dbReference type="Proteomes" id="UP000000589">
    <property type="component" value="Chromosome 16"/>
</dbReference>
<dbReference type="RNAct" id="Q8BVU0">
    <property type="molecule type" value="protein"/>
</dbReference>
<dbReference type="Bgee" id="ENSMUSG00000022801">
    <property type="expression patterns" value="Expressed in manus and 231 other cell types or tissues"/>
</dbReference>
<dbReference type="ExpressionAtlas" id="Q8BVU0">
    <property type="expression patterns" value="baseline and differential"/>
</dbReference>
<dbReference type="GO" id="GO:0005737">
    <property type="term" value="C:cytoplasm"/>
    <property type="evidence" value="ECO:0007669"/>
    <property type="project" value="UniProtKB-SubCell"/>
</dbReference>
<dbReference type="GO" id="GO:0032185">
    <property type="term" value="P:septin cytoskeleton organization"/>
    <property type="evidence" value="ECO:0000250"/>
    <property type="project" value="UniProtKB"/>
</dbReference>
<dbReference type="CDD" id="cd21272">
    <property type="entry name" value="CH_LRCH3"/>
    <property type="match status" value="1"/>
</dbReference>
<dbReference type="FunFam" id="1.10.418.10:FF:000021">
    <property type="entry name" value="Leucine-rich repeat and calponin homology domain-containing protein 1 isoform 3"/>
    <property type="match status" value="1"/>
</dbReference>
<dbReference type="FunFam" id="3.80.10.10:FF:000007">
    <property type="entry name" value="Leucine-rich repeat and calponin homology domain-containing protein 1 isoform 3"/>
    <property type="match status" value="1"/>
</dbReference>
<dbReference type="Gene3D" id="1.10.418.10">
    <property type="entry name" value="Calponin-like domain"/>
    <property type="match status" value="1"/>
</dbReference>
<dbReference type="Gene3D" id="3.80.10.10">
    <property type="entry name" value="Ribonuclease Inhibitor"/>
    <property type="match status" value="1"/>
</dbReference>
<dbReference type="InterPro" id="IPR001715">
    <property type="entry name" value="CH_dom"/>
</dbReference>
<dbReference type="InterPro" id="IPR036872">
    <property type="entry name" value="CH_dom_sf"/>
</dbReference>
<dbReference type="InterPro" id="IPR001611">
    <property type="entry name" value="Leu-rich_rpt"/>
</dbReference>
<dbReference type="InterPro" id="IPR003591">
    <property type="entry name" value="Leu-rich_rpt_typical-subtyp"/>
</dbReference>
<dbReference type="InterPro" id="IPR032675">
    <property type="entry name" value="LRR_dom_sf"/>
</dbReference>
<dbReference type="InterPro" id="IPR050216">
    <property type="entry name" value="LRR_domain-containing"/>
</dbReference>
<dbReference type="PANTHER" id="PTHR48051">
    <property type="match status" value="1"/>
</dbReference>
<dbReference type="PANTHER" id="PTHR48051:SF44">
    <property type="entry name" value="LEUCINE RICH REPEATS AND CALPONIN HOMOLOGY DOMAIN CONTAINING 3"/>
    <property type="match status" value="1"/>
</dbReference>
<dbReference type="Pfam" id="PF00307">
    <property type="entry name" value="CH"/>
    <property type="match status" value="1"/>
</dbReference>
<dbReference type="Pfam" id="PF13855">
    <property type="entry name" value="LRR_8"/>
    <property type="match status" value="2"/>
</dbReference>
<dbReference type="SMART" id="SM00033">
    <property type="entry name" value="CH"/>
    <property type="match status" value="1"/>
</dbReference>
<dbReference type="SMART" id="SM00364">
    <property type="entry name" value="LRR_BAC"/>
    <property type="match status" value="4"/>
</dbReference>
<dbReference type="SMART" id="SM00369">
    <property type="entry name" value="LRR_TYP"/>
    <property type="match status" value="5"/>
</dbReference>
<dbReference type="SUPFAM" id="SSF47576">
    <property type="entry name" value="Calponin-homology domain, CH-domain"/>
    <property type="match status" value="1"/>
</dbReference>
<dbReference type="SUPFAM" id="SSF52058">
    <property type="entry name" value="L domain-like"/>
    <property type="match status" value="1"/>
</dbReference>
<dbReference type="PROSITE" id="PS50021">
    <property type="entry name" value="CH"/>
    <property type="match status" value="1"/>
</dbReference>
<sequence length="778" mass="86341">MAAAGLVAVVAAAEYSGPVASGGNLSGATCGPSPGLGPGPGPGSWSRSVDRALEEAAVTGVLSLSGRKLREFPRGAANHDLTDTTRADLSRNRLSEIPMEACHFVSLESLNLYQNCIRYIPEAVLNLQALTFLNISRNQLSTLPVHLCNLPLKVLIASNNKLVSLPEEIGHLRHLTELDVSCNEIQTVPSQIGNLEALRDFNVRRNHLLRLPEELAEVPLIRLDFSCNKITVIPVCYRNLRHLQVITLDNNPLQSPPAQICIKGKIHIFKYLNIQACKIAPDLPDYERRPLGFGSCHEELYSGRPYGALDSGFNSVDSGDKRWSGNEPTDEFSDLPLRVAEITKEQRLRRESQYQENRSSVAVTNGGVEHDLDQIDYIDSCTTEEEENDVKQPKSLDTNSLSSQFMAYIEQRRISHEVSPVKPIAVREFQKTEDMKRYSHQNRVPVEPSLVLSMPPSHNQLSHSDLELHQRREQSIECTRREAQLAALQYEEEKIRTKQIQRDAVLDFVKQKASHNPQRQQPPGNGECSFPSRRSQHTDDSALLVSLSGLDGVSCVATRPHSSAFTPLKSENRVDVTSSFPMTETVHHSPAYSFPAATQRNQPQRPESFLFRAAVRAEANKGRASPLLLSSAPATDPTDAITRQREEELKLIDQLRKHIEYRLKVSLPCDLGAALTDGVVLCHLANHVRPRSVPSIHVPSPAVPKLTMAKCRRNVENFLDACRKIGVPQEQLCLPLHILEEKGLGQVAVTVQALLELAPPKQPPPQQPQQQQPQLSAV</sequence>
<accession>Q8BVU0</accession>
<accession>B2RXA0</accession>
<accession>Q3U222</accession>
<accession>Q3UZ74</accession>
<organism>
    <name type="scientific">Mus musculus</name>
    <name type="common">Mouse</name>
    <dbReference type="NCBI Taxonomy" id="10090"/>
    <lineage>
        <taxon>Eukaryota</taxon>
        <taxon>Metazoa</taxon>
        <taxon>Chordata</taxon>
        <taxon>Craniata</taxon>
        <taxon>Vertebrata</taxon>
        <taxon>Euteleostomi</taxon>
        <taxon>Mammalia</taxon>
        <taxon>Eutheria</taxon>
        <taxon>Euarchontoglires</taxon>
        <taxon>Glires</taxon>
        <taxon>Rodentia</taxon>
        <taxon>Myomorpha</taxon>
        <taxon>Muroidea</taxon>
        <taxon>Muridae</taxon>
        <taxon>Murinae</taxon>
        <taxon>Mus</taxon>
        <taxon>Mus</taxon>
    </lineage>
</organism>
<gene>
    <name evidence="6" type="primary">Lrch3</name>
</gene>
<proteinExistence type="evidence at protein level"/>
<keyword id="KW-0963">Cytoplasm</keyword>
<keyword id="KW-0433">Leucine-rich repeat</keyword>
<keyword id="KW-0597">Phosphoprotein</keyword>
<keyword id="KW-1185">Reference proteome</keyword>
<keyword id="KW-0677">Repeat</keyword>
<evidence type="ECO:0000250" key="1">
    <source>
        <dbReference type="UniProtKB" id="Q96II8"/>
    </source>
</evidence>
<evidence type="ECO:0000255" key="2"/>
<evidence type="ECO:0000255" key="3">
    <source>
        <dbReference type="PROSITE-ProRule" id="PRU00044"/>
    </source>
</evidence>
<evidence type="ECO:0000256" key="4">
    <source>
        <dbReference type="SAM" id="MobiDB-lite"/>
    </source>
</evidence>
<evidence type="ECO:0000305" key="5"/>
<evidence type="ECO:0000312" key="6">
    <source>
        <dbReference type="MGI" id="MGI:1917394"/>
    </source>
</evidence>
<evidence type="ECO:0007744" key="7">
    <source>
    </source>
</evidence>
<feature type="chain" id="PRO_0000253485" description="DISP complex protein LRCH3">
    <location>
        <begin position="1"/>
        <end position="778"/>
    </location>
</feature>
<feature type="repeat" description="LRR 1" evidence="2">
    <location>
        <begin position="56"/>
        <end position="79"/>
    </location>
</feature>
<feature type="repeat" description="LRR 2" evidence="2">
    <location>
        <begin position="81"/>
        <end position="104"/>
    </location>
</feature>
<feature type="repeat" description="LRR 3" evidence="2">
    <location>
        <begin position="105"/>
        <end position="127"/>
    </location>
</feature>
<feature type="repeat" description="LRR 4" evidence="2">
    <location>
        <begin position="128"/>
        <end position="150"/>
    </location>
</feature>
<feature type="repeat" description="LRR 5" evidence="2">
    <location>
        <begin position="152"/>
        <end position="172"/>
    </location>
</feature>
<feature type="repeat" description="LRR 6" evidence="2">
    <location>
        <begin position="173"/>
        <end position="195"/>
    </location>
</feature>
<feature type="repeat" description="LRR 7" evidence="2">
    <location>
        <begin position="197"/>
        <end position="218"/>
    </location>
</feature>
<feature type="repeat" description="LRR 8" evidence="2">
    <location>
        <begin position="220"/>
        <end position="239"/>
    </location>
</feature>
<feature type="repeat" description="LRR 9" evidence="2">
    <location>
        <begin position="240"/>
        <end position="264"/>
    </location>
</feature>
<feature type="repeat" description="LRR 10" evidence="2">
    <location>
        <begin position="266"/>
        <end position="290"/>
    </location>
</feature>
<feature type="domain" description="Calponin-homology (CH)" evidence="3">
    <location>
        <begin position="645"/>
        <end position="758"/>
    </location>
</feature>
<feature type="region of interest" description="Mediates interaction with DOCK7" evidence="1">
    <location>
        <begin position="56"/>
        <end position="290"/>
    </location>
</feature>
<feature type="region of interest" description="Mediates direct interaction with MYO6" evidence="1">
    <location>
        <begin position="382"/>
        <end position="642"/>
    </location>
</feature>
<feature type="region of interest" description="Disordered" evidence="4">
    <location>
        <begin position="511"/>
        <end position="536"/>
    </location>
</feature>
<feature type="region of interest" description="Disordered" evidence="4">
    <location>
        <begin position="758"/>
        <end position="778"/>
    </location>
</feature>
<feature type="compositionally biased region" description="Polar residues" evidence="4">
    <location>
        <begin position="514"/>
        <end position="523"/>
    </location>
</feature>
<feature type="compositionally biased region" description="Low complexity" evidence="4">
    <location>
        <begin position="768"/>
        <end position="778"/>
    </location>
</feature>
<feature type="modified residue" description="Phosphoserine" evidence="7">
    <location>
        <position position="324"/>
    </location>
</feature>
<feature type="modified residue" description="Phosphoserine" evidence="7">
    <location>
        <position position="415"/>
    </location>
</feature>
<feature type="modified residue" description="Phosphoserine" evidence="1">
    <location>
        <position position="419"/>
    </location>
</feature>
<feature type="modified residue" description="Phosphoserine" evidence="1">
    <location>
        <position position="608"/>
    </location>
</feature>
<feature type="modified residue" description="Phosphoserine" evidence="7">
    <location>
        <position position="625"/>
    </location>
</feature>
<feature type="sequence conflict" description="In Ref. 1; BAC36380." evidence="5" ref="1">
    <original>N</original>
    <variation>D</variation>
    <location>
        <position position="92"/>
    </location>
</feature>
<feature type="sequence conflict" description="In Ref. 1; BAC36380." evidence="5" ref="1">
    <original>E</original>
    <variation>K</variation>
    <location>
        <position position="168"/>
    </location>
</feature>
<feature type="sequence conflict" description="In Ref. 1; BAE33320." evidence="5" ref="1">
    <original>E</original>
    <variation>K</variation>
    <location>
        <position position="177"/>
    </location>
</feature>
<feature type="sequence conflict" description="In Ref. 1; BAC36380." evidence="5" ref="1">
    <original>N</original>
    <variation>I</variation>
    <location>
        <position position="206"/>
    </location>
</feature>
<protein>
    <recommendedName>
        <fullName evidence="1">DISP complex protein LRCH3</fullName>
    </recommendedName>
    <alternativeName>
        <fullName evidence="6">Leucine-rich repeat and calponin homology domain-containing protein 3</fullName>
    </alternativeName>
</protein>
<name>LRCH3_MOUSE</name>